<reference key="1">
    <citation type="journal article" date="2008" name="J. Bacteriol.">
        <title>The complete genome sequence of Actinobacillus pleuropneumoniae L20 (serotype 5b).</title>
        <authorList>
            <person name="Foote S.J."/>
            <person name="Bosse J.T."/>
            <person name="Bouevitch A.B."/>
            <person name="Langford P.R."/>
            <person name="Young N.M."/>
            <person name="Nash J.H.E."/>
        </authorList>
    </citation>
    <scope>NUCLEOTIDE SEQUENCE [LARGE SCALE GENOMIC DNA]</scope>
    <source>
        <strain>L20</strain>
    </source>
</reference>
<gene>
    <name type="ordered locus">APL_0712</name>
</gene>
<name>Y712_ACTP2</name>
<accession>A3N076</accession>
<evidence type="ECO:0000255" key="1">
    <source>
        <dbReference type="HAMAP-Rule" id="MF_01866"/>
    </source>
</evidence>
<evidence type="ECO:0000305" key="2"/>
<proteinExistence type="inferred from homology"/>
<feature type="chain" id="PRO_0000375273" description="YcgL domain-containing protein APL_0712">
    <location>
        <begin position="1"/>
        <end position="97"/>
    </location>
</feature>
<feature type="domain" description="YcgL" evidence="1">
    <location>
        <begin position="6"/>
        <end position="90"/>
    </location>
</feature>
<keyword id="KW-1185">Reference proteome</keyword>
<sequence>MTMSTNLCAIYKSPKREGMFLYVAKRDQFDSVPEALRQMFGKPQFVMLFNLNGEKQLKRSKNEEVLQAIQTQGFFLQMPPPPENLLKTFLEQNRGEA</sequence>
<organism>
    <name type="scientific">Actinobacillus pleuropneumoniae serotype 5b (strain L20)</name>
    <dbReference type="NCBI Taxonomy" id="416269"/>
    <lineage>
        <taxon>Bacteria</taxon>
        <taxon>Pseudomonadati</taxon>
        <taxon>Pseudomonadota</taxon>
        <taxon>Gammaproteobacteria</taxon>
        <taxon>Pasteurellales</taxon>
        <taxon>Pasteurellaceae</taxon>
        <taxon>Actinobacillus</taxon>
    </lineage>
</organism>
<comment type="sequence caution" evidence="2">
    <conflict type="erroneous initiation">
        <sequence resource="EMBL-CDS" id="ABN73812"/>
    </conflict>
</comment>
<dbReference type="EMBL" id="CP000569">
    <property type="protein sequence ID" value="ABN73812.1"/>
    <property type="status" value="ALT_INIT"/>
    <property type="molecule type" value="Genomic_DNA"/>
</dbReference>
<dbReference type="SMR" id="A3N076"/>
<dbReference type="STRING" id="416269.APL_0712"/>
<dbReference type="EnsemblBacteria" id="ABN73812">
    <property type="protein sequence ID" value="ABN73812"/>
    <property type="gene ID" value="APL_0712"/>
</dbReference>
<dbReference type="KEGG" id="apl:APL_0712"/>
<dbReference type="eggNOG" id="COG3100">
    <property type="taxonomic scope" value="Bacteria"/>
</dbReference>
<dbReference type="HOGENOM" id="CLU_205648_0_0_6"/>
<dbReference type="Proteomes" id="UP000001432">
    <property type="component" value="Chromosome"/>
</dbReference>
<dbReference type="Gene3D" id="3.10.510.20">
    <property type="entry name" value="YcgL domain"/>
    <property type="match status" value="1"/>
</dbReference>
<dbReference type="HAMAP" id="MF_01866">
    <property type="entry name" value="UPF0745"/>
    <property type="match status" value="1"/>
</dbReference>
<dbReference type="InterPro" id="IPR038068">
    <property type="entry name" value="YcgL-like_sf"/>
</dbReference>
<dbReference type="InterPro" id="IPR027354">
    <property type="entry name" value="YcgL_dom"/>
</dbReference>
<dbReference type="PANTHER" id="PTHR38109">
    <property type="entry name" value="PROTEIN YCGL"/>
    <property type="match status" value="1"/>
</dbReference>
<dbReference type="PANTHER" id="PTHR38109:SF1">
    <property type="entry name" value="PROTEIN YCGL"/>
    <property type="match status" value="1"/>
</dbReference>
<dbReference type="Pfam" id="PF05166">
    <property type="entry name" value="YcgL"/>
    <property type="match status" value="1"/>
</dbReference>
<dbReference type="SUPFAM" id="SSF160191">
    <property type="entry name" value="YcgL-like"/>
    <property type="match status" value="1"/>
</dbReference>
<dbReference type="PROSITE" id="PS51648">
    <property type="entry name" value="YCGL"/>
    <property type="match status" value="1"/>
</dbReference>
<protein>
    <recommendedName>
        <fullName evidence="1">YcgL domain-containing protein APL_0712</fullName>
    </recommendedName>
</protein>